<organism>
    <name type="scientific">Clostridioides difficile (strain 630)</name>
    <name type="common">Peptoclostridium difficile</name>
    <dbReference type="NCBI Taxonomy" id="272563"/>
    <lineage>
        <taxon>Bacteria</taxon>
        <taxon>Bacillati</taxon>
        <taxon>Bacillota</taxon>
        <taxon>Clostridia</taxon>
        <taxon>Peptostreptococcales</taxon>
        <taxon>Peptostreptococcaceae</taxon>
        <taxon>Clostridioides</taxon>
    </lineage>
</organism>
<protein>
    <recommendedName>
        <fullName evidence="1">DNA ligase</fullName>
        <ecNumber evidence="1">6.5.1.2</ecNumber>
    </recommendedName>
    <alternativeName>
        <fullName evidence="1">Polydeoxyribonucleotide synthase [NAD(+)]</fullName>
    </alternativeName>
</protein>
<dbReference type="EC" id="6.5.1.2" evidence="1"/>
<dbReference type="EMBL" id="AM180355">
    <property type="protein sequence ID" value="CAJ70206.2"/>
    <property type="molecule type" value="Genomic_DNA"/>
</dbReference>
<dbReference type="RefSeq" id="WP_011861898.1">
    <property type="nucleotide sequence ID" value="NZ_JAUPES010000002.1"/>
</dbReference>
<dbReference type="RefSeq" id="YP_001089825.2">
    <property type="nucleotide sequence ID" value="NC_009089.1"/>
</dbReference>
<dbReference type="SMR" id="Q180F3"/>
<dbReference type="STRING" id="272563.CD630_33090"/>
<dbReference type="EnsemblBacteria" id="CAJ70206">
    <property type="protein sequence ID" value="CAJ70206"/>
    <property type="gene ID" value="CD630_33090"/>
</dbReference>
<dbReference type="KEGG" id="cdf:CD630_33090"/>
<dbReference type="KEGG" id="pdc:CDIF630_03610"/>
<dbReference type="PATRIC" id="fig|272563.120.peg.3494"/>
<dbReference type="eggNOG" id="COG0272">
    <property type="taxonomic scope" value="Bacteria"/>
</dbReference>
<dbReference type="OrthoDB" id="9759736at2"/>
<dbReference type="PhylomeDB" id="Q180F3"/>
<dbReference type="BioCyc" id="PDIF272563:G12WB-3476-MONOMER"/>
<dbReference type="Proteomes" id="UP000001978">
    <property type="component" value="Chromosome"/>
</dbReference>
<dbReference type="GO" id="GO:0005829">
    <property type="term" value="C:cytosol"/>
    <property type="evidence" value="ECO:0007669"/>
    <property type="project" value="TreeGrafter"/>
</dbReference>
<dbReference type="GO" id="GO:0003677">
    <property type="term" value="F:DNA binding"/>
    <property type="evidence" value="ECO:0007669"/>
    <property type="project" value="InterPro"/>
</dbReference>
<dbReference type="GO" id="GO:0003911">
    <property type="term" value="F:DNA ligase (NAD+) activity"/>
    <property type="evidence" value="ECO:0007669"/>
    <property type="project" value="UniProtKB-UniRule"/>
</dbReference>
<dbReference type="GO" id="GO:0046872">
    <property type="term" value="F:metal ion binding"/>
    <property type="evidence" value="ECO:0007669"/>
    <property type="project" value="UniProtKB-KW"/>
</dbReference>
<dbReference type="GO" id="GO:0006281">
    <property type="term" value="P:DNA repair"/>
    <property type="evidence" value="ECO:0007669"/>
    <property type="project" value="UniProtKB-KW"/>
</dbReference>
<dbReference type="GO" id="GO:0006260">
    <property type="term" value="P:DNA replication"/>
    <property type="evidence" value="ECO:0007669"/>
    <property type="project" value="UniProtKB-KW"/>
</dbReference>
<dbReference type="CDD" id="cd17748">
    <property type="entry name" value="BRCT_DNA_ligase_like"/>
    <property type="match status" value="1"/>
</dbReference>
<dbReference type="CDD" id="cd00114">
    <property type="entry name" value="LIGANc"/>
    <property type="match status" value="1"/>
</dbReference>
<dbReference type="FunFam" id="1.10.150.20:FF:000006">
    <property type="entry name" value="DNA ligase"/>
    <property type="match status" value="1"/>
</dbReference>
<dbReference type="FunFam" id="1.10.150.20:FF:000007">
    <property type="entry name" value="DNA ligase"/>
    <property type="match status" value="1"/>
</dbReference>
<dbReference type="FunFam" id="1.10.287.610:FF:000002">
    <property type="entry name" value="DNA ligase"/>
    <property type="match status" value="1"/>
</dbReference>
<dbReference type="FunFam" id="2.40.50.140:FF:000012">
    <property type="entry name" value="DNA ligase"/>
    <property type="match status" value="1"/>
</dbReference>
<dbReference type="FunFam" id="3.30.470.30:FF:000001">
    <property type="entry name" value="DNA ligase"/>
    <property type="match status" value="1"/>
</dbReference>
<dbReference type="Gene3D" id="6.20.10.30">
    <property type="match status" value="1"/>
</dbReference>
<dbReference type="Gene3D" id="1.10.150.20">
    <property type="entry name" value="5' to 3' exonuclease, C-terminal subdomain"/>
    <property type="match status" value="2"/>
</dbReference>
<dbReference type="Gene3D" id="3.40.50.10190">
    <property type="entry name" value="BRCT domain"/>
    <property type="match status" value="1"/>
</dbReference>
<dbReference type="Gene3D" id="3.30.470.30">
    <property type="entry name" value="DNA ligase/mRNA capping enzyme"/>
    <property type="match status" value="1"/>
</dbReference>
<dbReference type="Gene3D" id="1.10.287.610">
    <property type="entry name" value="Helix hairpin bin"/>
    <property type="match status" value="1"/>
</dbReference>
<dbReference type="Gene3D" id="2.40.50.140">
    <property type="entry name" value="Nucleic acid-binding proteins"/>
    <property type="match status" value="1"/>
</dbReference>
<dbReference type="HAMAP" id="MF_01588">
    <property type="entry name" value="DNA_ligase_A"/>
    <property type="match status" value="1"/>
</dbReference>
<dbReference type="InterPro" id="IPR001357">
    <property type="entry name" value="BRCT_dom"/>
</dbReference>
<dbReference type="InterPro" id="IPR036420">
    <property type="entry name" value="BRCT_dom_sf"/>
</dbReference>
<dbReference type="InterPro" id="IPR041663">
    <property type="entry name" value="DisA/LigA_HHH"/>
</dbReference>
<dbReference type="InterPro" id="IPR001679">
    <property type="entry name" value="DNA_ligase"/>
</dbReference>
<dbReference type="InterPro" id="IPR018239">
    <property type="entry name" value="DNA_ligase_AS"/>
</dbReference>
<dbReference type="InterPro" id="IPR013839">
    <property type="entry name" value="DNAligase_adenylation"/>
</dbReference>
<dbReference type="InterPro" id="IPR013840">
    <property type="entry name" value="DNAligase_N"/>
</dbReference>
<dbReference type="InterPro" id="IPR003583">
    <property type="entry name" value="Hlx-hairpin-Hlx_DNA-bd_motif"/>
</dbReference>
<dbReference type="InterPro" id="IPR012340">
    <property type="entry name" value="NA-bd_OB-fold"/>
</dbReference>
<dbReference type="InterPro" id="IPR004150">
    <property type="entry name" value="NAD_DNA_ligase_OB"/>
</dbReference>
<dbReference type="InterPro" id="IPR010994">
    <property type="entry name" value="RuvA_2-like"/>
</dbReference>
<dbReference type="InterPro" id="IPR004149">
    <property type="entry name" value="Znf_DNAligase_C4"/>
</dbReference>
<dbReference type="NCBIfam" id="TIGR00575">
    <property type="entry name" value="dnlj"/>
    <property type="match status" value="1"/>
</dbReference>
<dbReference type="NCBIfam" id="NF005932">
    <property type="entry name" value="PRK07956.1"/>
    <property type="match status" value="1"/>
</dbReference>
<dbReference type="PANTHER" id="PTHR23389">
    <property type="entry name" value="CHROMOSOME TRANSMISSION FIDELITY FACTOR 18"/>
    <property type="match status" value="1"/>
</dbReference>
<dbReference type="PANTHER" id="PTHR23389:SF9">
    <property type="entry name" value="DNA LIGASE"/>
    <property type="match status" value="1"/>
</dbReference>
<dbReference type="Pfam" id="PF00533">
    <property type="entry name" value="BRCT"/>
    <property type="match status" value="1"/>
</dbReference>
<dbReference type="Pfam" id="PF01653">
    <property type="entry name" value="DNA_ligase_aden"/>
    <property type="match status" value="1"/>
</dbReference>
<dbReference type="Pfam" id="PF03120">
    <property type="entry name" value="DNA_ligase_OB"/>
    <property type="match status" value="1"/>
</dbReference>
<dbReference type="Pfam" id="PF03119">
    <property type="entry name" value="DNA_ligase_ZBD"/>
    <property type="match status" value="1"/>
</dbReference>
<dbReference type="Pfam" id="PF12826">
    <property type="entry name" value="HHH_2"/>
    <property type="match status" value="1"/>
</dbReference>
<dbReference type="Pfam" id="PF22745">
    <property type="entry name" value="Nlig-Ia"/>
    <property type="match status" value="1"/>
</dbReference>
<dbReference type="PIRSF" id="PIRSF001604">
    <property type="entry name" value="LigA"/>
    <property type="match status" value="1"/>
</dbReference>
<dbReference type="SMART" id="SM00292">
    <property type="entry name" value="BRCT"/>
    <property type="match status" value="1"/>
</dbReference>
<dbReference type="SMART" id="SM00278">
    <property type="entry name" value="HhH1"/>
    <property type="match status" value="3"/>
</dbReference>
<dbReference type="SMART" id="SM00532">
    <property type="entry name" value="LIGANc"/>
    <property type="match status" value="1"/>
</dbReference>
<dbReference type="SUPFAM" id="SSF52113">
    <property type="entry name" value="BRCT domain"/>
    <property type="match status" value="1"/>
</dbReference>
<dbReference type="SUPFAM" id="SSF56091">
    <property type="entry name" value="DNA ligase/mRNA capping enzyme, catalytic domain"/>
    <property type="match status" value="1"/>
</dbReference>
<dbReference type="SUPFAM" id="SSF50249">
    <property type="entry name" value="Nucleic acid-binding proteins"/>
    <property type="match status" value="1"/>
</dbReference>
<dbReference type="SUPFAM" id="SSF47781">
    <property type="entry name" value="RuvA domain 2-like"/>
    <property type="match status" value="1"/>
</dbReference>
<dbReference type="PROSITE" id="PS50172">
    <property type="entry name" value="BRCT"/>
    <property type="match status" value="1"/>
</dbReference>
<dbReference type="PROSITE" id="PS01055">
    <property type="entry name" value="DNA_LIGASE_N1"/>
    <property type="match status" value="1"/>
</dbReference>
<reference key="1">
    <citation type="journal article" date="2006" name="Nat. Genet.">
        <title>The multidrug-resistant human pathogen Clostridium difficile has a highly mobile, mosaic genome.</title>
        <authorList>
            <person name="Sebaihia M."/>
            <person name="Wren B.W."/>
            <person name="Mullany P."/>
            <person name="Fairweather N.F."/>
            <person name="Minton N."/>
            <person name="Stabler R."/>
            <person name="Thomson N.R."/>
            <person name="Roberts A.P."/>
            <person name="Cerdeno-Tarraga A.M."/>
            <person name="Wang H."/>
            <person name="Holden M.T.G."/>
            <person name="Wright A."/>
            <person name="Churcher C."/>
            <person name="Quail M.A."/>
            <person name="Baker S."/>
            <person name="Bason N."/>
            <person name="Brooks K."/>
            <person name="Chillingworth T."/>
            <person name="Cronin A."/>
            <person name="Davis P."/>
            <person name="Dowd L."/>
            <person name="Fraser A."/>
            <person name="Feltwell T."/>
            <person name="Hance Z."/>
            <person name="Holroyd S."/>
            <person name="Jagels K."/>
            <person name="Moule S."/>
            <person name="Mungall K."/>
            <person name="Price C."/>
            <person name="Rabbinowitsch E."/>
            <person name="Sharp S."/>
            <person name="Simmonds M."/>
            <person name="Stevens K."/>
            <person name="Unwin L."/>
            <person name="Whithead S."/>
            <person name="Dupuy B."/>
            <person name="Dougan G."/>
            <person name="Barrell B."/>
            <person name="Parkhill J."/>
        </authorList>
    </citation>
    <scope>NUCLEOTIDE SEQUENCE [LARGE SCALE GENOMIC DNA]</scope>
    <source>
        <strain>630</strain>
    </source>
</reference>
<keyword id="KW-0227">DNA damage</keyword>
<keyword id="KW-0234">DNA repair</keyword>
<keyword id="KW-0235">DNA replication</keyword>
<keyword id="KW-0436">Ligase</keyword>
<keyword id="KW-0460">Magnesium</keyword>
<keyword id="KW-0464">Manganese</keyword>
<keyword id="KW-0479">Metal-binding</keyword>
<keyword id="KW-0520">NAD</keyword>
<keyword id="KW-1185">Reference proteome</keyword>
<keyword id="KW-0862">Zinc</keyword>
<comment type="function">
    <text evidence="1">DNA ligase that catalyzes the formation of phosphodiester linkages between 5'-phosphoryl and 3'-hydroxyl groups in double-stranded DNA using NAD as a coenzyme and as the energy source for the reaction. It is essential for DNA replication and repair of damaged DNA.</text>
</comment>
<comment type="catalytic activity">
    <reaction evidence="1">
        <text>NAD(+) + (deoxyribonucleotide)n-3'-hydroxyl + 5'-phospho-(deoxyribonucleotide)m = (deoxyribonucleotide)n+m + AMP + beta-nicotinamide D-nucleotide.</text>
        <dbReference type="EC" id="6.5.1.2"/>
    </reaction>
</comment>
<comment type="cofactor">
    <cofactor evidence="1">
        <name>Mg(2+)</name>
        <dbReference type="ChEBI" id="CHEBI:18420"/>
    </cofactor>
    <cofactor evidence="1">
        <name>Mn(2+)</name>
        <dbReference type="ChEBI" id="CHEBI:29035"/>
    </cofactor>
</comment>
<comment type="similarity">
    <text evidence="1">Belongs to the NAD-dependent DNA ligase family. LigA subfamily.</text>
</comment>
<gene>
    <name evidence="1" type="primary">ligA</name>
    <name type="ordered locus">CD630_33090</name>
</gene>
<proteinExistence type="inferred from homology"/>
<sequence length="674" mass="76416">MSVKDEINKLIETINYHNERYYNQDSPEISDYEYDKLMKELISLEEEHPELKRIDSPTNRVGGKPLDKFNQIVHKTPMLSLSNAFSEQDLRDFDKRVQEYVGENVEYVVEFKIDGLSVGLTYNNGEFEKGATRGDGVVGEDISQNLMTVKSIPLKINDKKELIVRGEVYISKDNFRKVNEQQEEQEQPLFANPRNLAAGSLRQLDPKLTAKRPLDIFVFNMENIEEYDLESHSESLEYLEKLGFSVSQSYKVCKSIDEVIEHIEYWTDNRGNLDYEIDGMVIKVNNIKQRDEMGYTAKSPRWAIAYKFPAEKKKTKIVDIIVEVGRTGTITPSAILEPVRLAGTTVSRATLHNEDYIREKDIKINDTVLVQKAGDIIPQVLEVIKEERTGDEIDFKMPEKCPVCSEPTIRLEGEAAVKCINMSCPAQIRRGIIHFVSRDAMNIDGLGESIITLLLNEKIIQDVSDLYYIKKEDVVDLERMGEKSADNLINSIEKSKENDLWRLINGLGIKFIGVKAAKILAYNFKDLDEVISATSEQLEELEEFGSIMANSVVEFFKEDKNMNVINKLKNVGVNTKSLDNTGEKVEKIFEGMKIVLTGTLPTLKRNDAKEMIEKRGGKATSSVSKSTTFVLAGEEAGSKLTKANDLGIKVIDEERFLELLKLSSKDEVKAVLES</sequence>
<evidence type="ECO:0000255" key="1">
    <source>
        <dbReference type="HAMAP-Rule" id="MF_01588"/>
    </source>
</evidence>
<name>DNLJ_CLOD6</name>
<accession>Q180F3</accession>
<feature type="chain" id="PRO_0000313197" description="DNA ligase">
    <location>
        <begin position="1"/>
        <end position="674"/>
    </location>
</feature>
<feature type="domain" description="BRCT" evidence="1">
    <location>
        <begin position="584"/>
        <end position="673"/>
    </location>
</feature>
<feature type="active site" description="N6-AMP-lysine intermediate" evidence="1">
    <location>
        <position position="112"/>
    </location>
</feature>
<feature type="binding site" evidence="1">
    <location>
        <begin position="31"/>
        <end position="35"/>
    </location>
    <ligand>
        <name>NAD(+)</name>
        <dbReference type="ChEBI" id="CHEBI:57540"/>
    </ligand>
</feature>
<feature type="binding site" evidence="1">
    <location>
        <begin position="80"/>
        <end position="81"/>
    </location>
    <ligand>
        <name>NAD(+)</name>
        <dbReference type="ChEBI" id="CHEBI:57540"/>
    </ligand>
</feature>
<feature type="binding site" evidence="1">
    <location>
        <position position="110"/>
    </location>
    <ligand>
        <name>NAD(+)</name>
        <dbReference type="ChEBI" id="CHEBI:57540"/>
    </ligand>
</feature>
<feature type="binding site" evidence="1">
    <location>
        <position position="133"/>
    </location>
    <ligand>
        <name>NAD(+)</name>
        <dbReference type="ChEBI" id="CHEBI:57540"/>
    </ligand>
</feature>
<feature type="binding site" evidence="1">
    <location>
        <position position="167"/>
    </location>
    <ligand>
        <name>NAD(+)</name>
        <dbReference type="ChEBI" id="CHEBI:57540"/>
    </ligand>
</feature>
<feature type="binding site" evidence="1">
    <location>
        <position position="283"/>
    </location>
    <ligand>
        <name>NAD(+)</name>
        <dbReference type="ChEBI" id="CHEBI:57540"/>
    </ligand>
</feature>
<feature type="binding site" evidence="1">
    <location>
        <position position="307"/>
    </location>
    <ligand>
        <name>NAD(+)</name>
        <dbReference type="ChEBI" id="CHEBI:57540"/>
    </ligand>
</feature>
<feature type="binding site" evidence="1">
    <location>
        <position position="401"/>
    </location>
    <ligand>
        <name>Zn(2+)</name>
        <dbReference type="ChEBI" id="CHEBI:29105"/>
    </ligand>
</feature>
<feature type="binding site" evidence="1">
    <location>
        <position position="404"/>
    </location>
    <ligand>
        <name>Zn(2+)</name>
        <dbReference type="ChEBI" id="CHEBI:29105"/>
    </ligand>
</feature>
<feature type="binding site" evidence="1">
    <location>
        <position position="419"/>
    </location>
    <ligand>
        <name>Zn(2+)</name>
        <dbReference type="ChEBI" id="CHEBI:29105"/>
    </ligand>
</feature>
<feature type="binding site" evidence="1">
    <location>
        <position position="424"/>
    </location>
    <ligand>
        <name>Zn(2+)</name>
        <dbReference type="ChEBI" id="CHEBI:29105"/>
    </ligand>
</feature>